<proteinExistence type="evidence at protein level"/>
<gene>
    <name evidence="11" type="primary">NEPRO</name>
    <name type="synonym">C3orf17</name>
</gene>
<reference key="1">
    <citation type="journal article" date="2004" name="Nat. Genet.">
        <title>Complete sequencing and characterization of 21,243 full-length human cDNAs.</title>
        <authorList>
            <person name="Ota T."/>
            <person name="Suzuki Y."/>
            <person name="Nishikawa T."/>
            <person name="Otsuki T."/>
            <person name="Sugiyama T."/>
            <person name="Irie R."/>
            <person name="Wakamatsu A."/>
            <person name="Hayashi K."/>
            <person name="Sato H."/>
            <person name="Nagai K."/>
            <person name="Kimura K."/>
            <person name="Makita H."/>
            <person name="Sekine M."/>
            <person name="Obayashi M."/>
            <person name="Nishi T."/>
            <person name="Shibahara T."/>
            <person name="Tanaka T."/>
            <person name="Ishii S."/>
            <person name="Yamamoto J."/>
            <person name="Saito K."/>
            <person name="Kawai Y."/>
            <person name="Isono Y."/>
            <person name="Nakamura Y."/>
            <person name="Nagahari K."/>
            <person name="Murakami K."/>
            <person name="Yasuda T."/>
            <person name="Iwayanagi T."/>
            <person name="Wagatsuma M."/>
            <person name="Shiratori A."/>
            <person name="Sudo H."/>
            <person name="Hosoiri T."/>
            <person name="Kaku Y."/>
            <person name="Kodaira H."/>
            <person name="Kondo H."/>
            <person name="Sugawara M."/>
            <person name="Takahashi M."/>
            <person name="Kanda K."/>
            <person name="Yokoi T."/>
            <person name="Furuya T."/>
            <person name="Kikkawa E."/>
            <person name="Omura Y."/>
            <person name="Abe K."/>
            <person name="Kamihara K."/>
            <person name="Katsuta N."/>
            <person name="Sato K."/>
            <person name="Tanikawa M."/>
            <person name="Yamazaki M."/>
            <person name="Ninomiya K."/>
            <person name="Ishibashi T."/>
            <person name="Yamashita H."/>
            <person name="Murakawa K."/>
            <person name="Fujimori K."/>
            <person name="Tanai H."/>
            <person name="Kimata M."/>
            <person name="Watanabe M."/>
            <person name="Hiraoka S."/>
            <person name="Chiba Y."/>
            <person name="Ishida S."/>
            <person name="Ono Y."/>
            <person name="Takiguchi S."/>
            <person name="Watanabe S."/>
            <person name="Yosida M."/>
            <person name="Hotuta T."/>
            <person name="Kusano J."/>
            <person name="Kanehori K."/>
            <person name="Takahashi-Fujii A."/>
            <person name="Hara H."/>
            <person name="Tanase T.-O."/>
            <person name="Nomura Y."/>
            <person name="Togiya S."/>
            <person name="Komai F."/>
            <person name="Hara R."/>
            <person name="Takeuchi K."/>
            <person name="Arita M."/>
            <person name="Imose N."/>
            <person name="Musashino K."/>
            <person name="Yuuki H."/>
            <person name="Oshima A."/>
            <person name="Sasaki N."/>
            <person name="Aotsuka S."/>
            <person name="Yoshikawa Y."/>
            <person name="Matsunawa H."/>
            <person name="Ichihara T."/>
            <person name="Shiohata N."/>
            <person name="Sano S."/>
            <person name="Moriya S."/>
            <person name="Momiyama H."/>
            <person name="Satoh N."/>
            <person name="Takami S."/>
            <person name="Terashima Y."/>
            <person name="Suzuki O."/>
            <person name="Nakagawa S."/>
            <person name="Senoh A."/>
            <person name="Mizoguchi H."/>
            <person name="Goto Y."/>
            <person name="Shimizu F."/>
            <person name="Wakebe H."/>
            <person name="Hishigaki H."/>
            <person name="Watanabe T."/>
            <person name="Sugiyama A."/>
            <person name="Takemoto M."/>
            <person name="Kawakami B."/>
            <person name="Yamazaki M."/>
            <person name="Watanabe K."/>
            <person name="Kumagai A."/>
            <person name="Itakura S."/>
            <person name="Fukuzumi Y."/>
            <person name="Fujimori Y."/>
            <person name="Komiyama M."/>
            <person name="Tashiro H."/>
            <person name="Tanigami A."/>
            <person name="Fujiwara T."/>
            <person name="Ono T."/>
            <person name="Yamada K."/>
            <person name="Fujii Y."/>
            <person name="Ozaki K."/>
            <person name="Hirao M."/>
            <person name="Ohmori Y."/>
            <person name="Kawabata A."/>
            <person name="Hikiji T."/>
            <person name="Kobatake N."/>
            <person name="Inagaki H."/>
            <person name="Ikema Y."/>
            <person name="Okamoto S."/>
            <person name="Okitani R."/>
            <person name="Kawakami T."/>
            <person name="Noguchi S."/>
            <person name="Itoh T."/>
            <person name="Shigeta K."/>
            <person name="Senba T."/>
            <person name="Matsumura K."/>
            <person name="Nakajima Y."/>
            <person name="Mizuno T."/>
            <person name="Morinaga M."/>
            <person name="Sasaki M."/>
            <person name="Togashi T."/>
            <person name="Oyama M."/>
            <person name="Hata H."/>
            <person name="Watanabe M."/>
            <person name="Komatsu T."/>
            <person name="Mizushima-Sugano J."/>
            <person name="Satoh T."/>
            <person name="Shirai Y."/>
            <person name="Takahashi Y."/>
            <person name="Nakagawa K."/>
            <person name="Okumura K."/>
            <person name="Nagase T."/>
            <person name="Nomura N."/>
            <person name="Kikuchi H."/>
            <person name="Masuho Y."/>
            <person name="Yamashita R."/>
            <person name="Nakai K."/>
            <person name="Yada T."/>
            <person name="Nakamura Y."/>
            <person name="Ohara O."/>
            <person name="Isogai T."/>
            <person name="Sugano S."/>
        </authorList>
    </citation>
    <scope>NUCLEOTIDE SEQUENCE [LARGE SCALE MRNA] (ISOFORM 1)</scope>
    <scope>VARIANT ILE-357</scope>
    <source>
        <tissue>Placenta</tissue>
    </source>
</reference>
<reference key="2">
    <citation type="journal article" date="2007" name="BMC Genomics">
        <title>The full-ORF clone resource of the German cDNA consortium.</title>
        <authorList>
            <person name="Bechtel S."/>
            <person name="Rosenfelder H."/>
            <person name="Duda A."/>
            <person name="Schmidt C.P."/>
            <person name="Ernst U."/>
            <person name="Wellenreuther R."/>
            <person name="Mehrle A."/>
            <person name="Schuster C."/>
            <person name="Bahr A."/>
            <person name="Bloecker H."/>
            <person name="Heubner D."/>
            <person name="Hoerlein A."/>
            <person name="Michel G."/>
            <person name="Wedler H."/>
            <person name="Koehrer K."/>
            <person name="Ottenwaelder B."/>
            <person name="Poustka A."/>
            <person name="Wiemann S."/>
            <person name="Schupp I."/>
        </authorList>
    </citation>
    <scope>NUCLEOTIDE SEQUENCE [LARGE SCALE MRNA] (ISOFORMS 1 AND 2)</scope>
    <scope>VARIANT PRO-490</scope>
    <source>
        <tissue>Cerebellum</tissue>
        <tissue>Testis</tissue>
    </source>
</reference>
<reference key="3">
    <citation type="submission" date="2005-09" db="EMBL/GenBank/DDBJ databases">
        <authorList>
            <person name="Mural R.J."/>
            <person name="Istrail S."/>
            <person name="Sutton G.G."/>
            <person name="Florea L."/>
            <person name="Halpern A.L."/>
            <person name="Mobarry C.M."/>
            <person name="Lippert R."/>
            <person name="Walenz B."/>
            <person name="Shatkay H."/>
            <person name="Dew I."/>
            <person name="Miller J.R."/>
            <person name="Flanigan M.J."/>
            <person name="Edwards N.J."/>
            <person name="Bolanos R."/>
            <person name="Fasulo D."/>
            <person name="Halldorsson B.V."/>
            <person name="Hannenhalli S."/>
            <person name="Turner R."/>
            <person name="Yooseph S."/>
            <person name="Lu F."/>
            <person name="Nusskern D.R."/>
            <person name="Shue B.C."/>
            <person name="Zheng X.H."/>
            <person name="Zhong F."/>
            <person name="Delcher A.L."/>
            <person name="Huson D.H."/>
            <person name="Kravitz S.A."/>
            <person name="Mouchard L."/>
            <person name="Reinert K."/>
            <person name="Remington K.A."/>
            <person name="Clark A.G."/>
            <person name="Waterman M.S."/>
            <person name="Eichler E.E."/>
            <person name="Adams M.D."/>
            <person name="Hunkapiller M.W."/>
            <person name="Myers E.W."/>
            <person name="Venter J.C."/>
        </authorList>
    </citation>
    <scope>NUCLEOTIDE SEQUENCE [LARGE SCALE GENOMIC DNA]</scope>
</reference>
<reference key="4">
    <citation type="journal article" date="2004" name="Genome Res.">
        <title>The status, quality, and expansion of the NIH full-length cDNA project: the Mammalian Gene Collection (MGC).</title>
        <authorList>
            <consortium name="The MGC Project Team"/>
        </authorList>
    </citation>
    <scope>NUCLEOTIDE SEQUENCE [LARGE SCALE MRNA] (ISOFORM 1)</scope>
    <scope>VARIANT ILE-357</scope>
    <source>
        <tissue>Brain</tissue>
    </source>
</reference>
<reference key="5">
    <citation type="journal article" date="2008" name="Mol. Cell">
        <title>Kinase-selective enrichment enables quantitative phosphoproteomics of the kinome across the cell cycle.</title>
        <authorList>
            <person name="Daub H."/>
            <person name="Olsen J.V."/>
            <person name="Bairlein M."/>
            <person name="Gnad F."/>
            <person name="Oppermann F.S."/>
            <person name="Korner R."/>
            <person name="Greff Z."/>
            <person name="Keri G."/>
            <person name="Stemmann O."/>
            <person name="Mann M."/>
        </authorList>
    </citation>
    <scope>PHOSPHORYLATION [LARGE SCALE ANALYSIS] AT SER-265</scope>
    <scope>IDENTIFICATION BY MASS SPECTROMETRY [LARGE SCALE ANALYSIS]</scope>
    <source>
        <tissue>Cervix carcinoma</tissue>
    </source>
</reference>
<reference key="6">
    <citation type="journal article" date="2008" name="Proc. Natl. Acad. Sci. U.S.A.">
        <title>A quantitative atlas of mitotic phosphorylation.</title>
        <authorList>
            <person name="Dephoure N."/>
            <person name="Zhou C."/>
            <person name="Villen J."/>
            <person name="Beausoleil S.A."/>
            <person name="Bakalarski C.E."/>
            <person name="Elledge S.J."/>
            <person name="Gygi S.P."/>
        </authorList>
    </citation>
    <scope>IDENTIFICATION BY MASS SPECTROMETRY [LARGE SCALE ANALYSIS]</scope>
    <source>
        <tissue>Cervix carcinoma</tissue>
    </source>
</reference>
<reference key="7">
    <citation type="journal article" date="2010" name="Sci. Signal.">
        <title>Quantitative phosphoproteomics reveals widespread full phosphorylation site occupancy during mitosis.</title>
        <authorList>
            <person name="Olsen J.V."/>
            <person name="Vermeulen M."/>
            <person name="Santamaria A."/>
            <person name="Kumar C."/>
            <person name="Miller M.L."/>
            <person name="Jensen L.J."/>
            <person name="Gnad F."/>
            <person name="Cox J."/>
            <person name="Jensen T.S."/>
            <person name="Nigg E.A."/>
            <person name="Brunak S."/>
            <person name="Mann M."/>
        </authorList>
    </citation>
    <scope>PHOSPHORYLATION [LARGE SCALE ANALYSIS] AT SER-265</scope>
    <scope>IDENTIFICATION BY MASS SPECTROMETRY [LARGE SCALE ANALYSIS]</scope>
    <source>
        <tissue>Cervix carcinoma</tissue>
    </source>
</reference>
<reference key="8">
    <citation type="journal article" date="2013" name="J. Proteome Res.">
        <title>Toward a comprehensive characterization of a human cancer cell phosphoproteome.</title>
        <authorList>
            <person name="Zhou H."/>
            <person name="Di Palma S."/>
            <person name="Preisinger C."/>
            <person name="Peng M."/>
            <person name="Polat A.N."/>
            <person name="Heck A.J."/>
            <person name="Mohammed S."/>
        </authorList>
    </citation>
    <scope>PHOSPHORYLATION [LARGE SCALE ANALYSIS] AT SER-265</scope>
    <scope>IDENTIFICATION BY MASS SPECTROMETRY [LARGE SCALE ANALYSIS]</scope>
    <source>
        <tissue>Cervix carcinoma</tissue>
        <tissue>Erythroleukemia</tissue>
    </source>
</reference>
<reference key="9">
    <citation type="journal article" date="2016" name="Genet. Med.">
        <title>Accelerating matchmaking of novel dysmorphology syndromes through clinical and genomic characterization of a large cohort.</title>
        <authorList>
            <person name="Shaheen R."/>
            <person name="Patel N."/>
            <person name="Shamseldin H."/>
            <person name="Alzahrani F."/>
            <person name="Al-Yamany R."/>
            <person name="Almoisheer A."/>
            <person name="Ewida N."/>
            <person name="Anazi S."/>
            <person name="Alnemer M."/>
            <person name="Elsheikh M."/>
            <person name="Alfaleh K."/>
            <person name="Alshammari M."/>
            <person name="Alhashem A."/>
            <person name="Alangari A.A."/>
            <person name="Salih M.A."/>
            <person name="Kircher M."/>
            <person name="Daza R.M."/>
            <person name="Ibrahim N."/>
            <person name="Wakil S.M."/>
            <person name="Alaqeel A."/>
            <person name="Altowaijri I."/>
            <person name="Shendure J."/>
            <person name="Al-Habib A."/>
            <person name="Faqieh E."/>
            <person name="Alkuraya F.S."/>
        </authorList>
    </citation>
    <scope>INVOLVEMENT IN ANXD3</scope>
    <scope>VARIANT ANXD3 CYS-94</scope>
</reference>
<reference key="10">
    <citation type="journal article" date="2018" name="Genet. Med.">
        <title>Expanding the phenome and variome of skeletal dysplasia.</title>
        <authorList>
            <person name="Maddirevula S."/>
            <person name="Alsahli S."/>
            <person name="Alhabeeb L."/>
            <person name="Patel N."/>
            <person name="Alzahrani F."/>
            <person name="Shamseldin H.E."/>
            <person name="Anazi S."/>
            <person name="Ewida N."/>
            <person name="Alsaif H.S."/>
            <person name="Mohamed J.Y."/>
            <person name="Alazami A.M."/>
            <person name="Ibrahim N."/>
            <person name="Abdulwahab F."/>
            <person name="Hashem M."/>
            <person name="Abouelhoda M."/>
            <person name="Monies D."/>
            <person name="Al Tassan N."/>
            <person name="Alshammari M."/>
            <person name="Alsagheir A."/>
            <person name="Seidahmed M.Z."/>
            <person name="Sogati S."/>
            <person name="Aglan M.S."/>
            <person name="Hamad M.H."/>
            <person name="Salih M.A."/>
            <person name="Hamed A.A."/>
            <person name="Alhashmi N."/>
            <person name="Nabil A."/>
            <person name="Alfadli F."/>
            <person name="Abdel-Salam G.M.H."/>
            <person name="Alkuraya H."/>
            <person name="Peitee W.O."/>
            <person name="Keng W.T."/>
            <person name="Qasem A."/>
            <person name="Mushiba A.M."/>
            <person name="Zaki M.S."/>
            <person name="Fassad M.R."/>
            <person name="Alfadhel M."/>
            <person name="Alexander S."/>
            <person name="Sabr Y."/>
            <person name="Temtamy S."/>
            <person name="Ekbote A.V."/>
            <person name="Ismail S."/>
            <person name="Hosny G.A."/>
            <person name="Otaify G.A."/>
            <person name="Amr K."/>
            <person name="Al Tala S."/>
            <person name="Khan A.O."/>
            <person name="Rizk T."/>
            <person name="Alaqeel A."/>
            <person name="Alsiddiky A."/>
            <person name="Singh A."/>
            <person name="Kapoor S."/>
            <person name="Alhashem A."/>
            <person name="Faqeih E."/>
            <person name="Shaheen R."/>
            <person name="Alkuraya F.S."/>
        </authorList>
    </citation>
    <scope>VARIANT ANXD3 CYS-94</scope>
</reference>
<reference key="11">
    <citation type="journal article" date="2019" name="Am. J. Med. Genet. A">
        <title>An emerging ribosomopathy affecting the skeleton due to biallelic variations in NEPRO.</title>
        <authorList>
            <person name="Narayanan D.L."/>
            <person name="Shukla A."/>
            <person name="Kausthubham N."/>
            <person name="Bhavani G.S."/>
            <person name="Shah H."/>
            <person name="Mortier G."/>
            <person name="Girisha K.M."/>
        </authorList>
    </citation>
    <scope>VARIANT ANXD3 PHE-145</scope>
</reference>
<dbReference type="EMBL" id="AK024325">
    <property type="protein sequence ID" value="BAB14885.1"/>
    <property type="molecule type" value="mRNA"/>
</dbReference>
<dbReference type="EMBL" id="AL117573">
    <property type="protein sequence ID" value="CAB55998.1"/>
    <property type="status" value="ALT_INIT"/>
    <property type="molecule type" value="mRNA"/>
</dbReference>
<dbReference type="EMBL" id="CR749341">
    <property type="protein sequence ID" value="CAH18194.1"/>
    <property type="molecule type" value="mRNA"/>
</dbReference>
<dbReference type="EMBL" id="CH471052">
    <property type="protein sequence ID" value="EAW79648.1"/>
    <property type="molecule type" value="Genomic_DNA"/>
</dbReference>
<dbReference type="EMBL" id="CH471052">
    <property type="protein sequence ID" value="EAW79649.1"/>
    <property type="molecule type" value="Genomic_DNA"/>
</dbReference>
<dbReference type="EMBL" id="BC067743">
    <property type="protein sequence ID" value="AAH67743.1"/>
    <property type="molecule type" value="mRNA"/>
</dbReference>
<dbReference type="CCDS" id="CCDS33824.1">
    <molecule id="Q6NW34-1"/>
</dbReference>
<dbReference type="CCDS" id="CCDS82820.1">
    <molecule id="Q6NW34-2"/>
</dbReference>
<dbReference type="PIR" id="T17308">
    <property type="entry name" value="T17308"/>
</dbReference>
<dbReference type="RefSeq" id="NP_001306038.1">
    <molecule id="Q6NW34-2"/>
    <property type="nucleotide sequence ID" value="NM_001319109.2"/>
</dbReference>
<dbReference type="RefSeq" id="NP_001306039.1">
    <property type="nucleotide sequence ID" value="NM_001319110.1"/>
</dbReference>
<dbReference type="RefSeq" id="NP_001306040.1">
    <property type="nucleotide sequence ID" value="NM_001319111.1"/>
</dbReference>
<dbReference type="RefSeq" id="NP_001306041.1">
    <property type="nucleotide sequence ID" value="NM_001319112.1"/>
</dbReference>
<dbReference type="RefSeq" id="NP_001306043.1">
    <property type="nucleotide sequence ID" value="NM_001319114.1"/>
</dbReference>
<dbReference type="RefSeq" id="NP_001306044.1">
    <property type="nucleotide sequence ID" value="NM_001319115.1"/>
</dbReference>
<dbReference type="RefSeq" id="NP_056227.2">
    <molecule id="Q6NW34-1"/>
    <property type="nucleotide sequence ID" value="NM_015412.4"/>
</dbReference>
<dbReference type="BioGRID" id="117387">
    <property type="interactions" value="128"/>
</dbReference>
<dbReference type="FunCoup" id="Q6NW34">
    <property type="interactions" value="2731"/>
</dbReference>
<dbReference type="IntAct" id="Q6NW34">
    <property type="interactions" value="72"/>
</dbReference>
<dbReference type="MINT" id="Q6NW34"/>
<dbReference type="STRING" id="9606.ENSP00000320251"/>
<dbReference type="GlyGen" id="Q6NW34">
    <property type="glycosylation" value="1 site, 1 N-linked glycan (1 site)"/>
</dbReference>
<dbReference type="iPTMnet" id="Q6NW34"/>
<dbReference type="PhosphoSitePlus" id="Q6NW34"/>
<dbReference type="SwissPalm" id="Q6NW34"/>
<dbReference type="BioMuta" id="NEPRO"/>
<dbReference type="DMDM" id="134047717"/>
<dbReference type="jPOST" id="Q6NW34"/>
<dbReference type="MassIVE" id="Q6NW34"/>
<dbReference type="PaxDb" id="9606-ENSP00000320251"/>
<dbReference type="PeptideAtlas" id="Q6NW34"/>
<dbReference type="ProteomicsDB" id="66738">
    <molecule id="Q6NW34-1"/>
</dbReference>
<dbReference type="ProteomicsDB" id="66739">
    <molecule id="Q6NW34-2"/>
</dbReference>
<dbReference type="Pumba" id="Q6NW34"/>
<dbReference type="Antibodypedia" id="32543">
    <property type="antibodies" value="88 antibodies from 18 providers"/>
</dbReference>
<dbReference type="DNASU" id="25871"/>
<dbReference type="Ensembl" id="ENST00000314400.10">
    <molecule id="Q6NW34-1"/>
    <property type="protein sequence ID" value="ENSP00000320251.5"/>
    <property type="gene ID" value="ENSG00000163608.15"/>
</dbReference>
<dbReference type="Ensembl" id="ENST00000383675.6">
    <molecule id="Q6NW34-2"/>
    <property type="protein sequence ID" value="ENSP00000373173.2"/>
    <property type="gene ID" value="ENSG00000163608.15"/>
</dbReference>
<dbReference type="GeneID" id="25871"/>
<dbReference type="KEGG" id="hsa:25871"/>
<dbReference type="MANE-Select" id="ENST00000314400.10">
    <property type="protein sequence ID" value="ENSP00000320251.5"/>
    <property type="RefSeq nucleotide sequence ID" value="NM_015412.4"/>
    <property type="RefSeq protein sequence ID" value="NP_056227.2"/>
</dbReference>
<dbReference type="UCSC" id="uc003dzr.4">
    <molecule id="Q6NW34-1"/>
    <property type="organism name" value="human"/>
</dbReference>
<dbReference type="AGR" id="HGNC:24496"/>
<dbReference type="CTD" id="25871"/>
<dbReference type="DisGeNET" id="25871"/>
<dbReference type="GeneCards" id="NEPRO"/>
<dbReference type="HGNC" id="HGNC:24496">
    <property type="gene designation" value="NEPRO"/>
</dbReference>
<dbReference type="HPA" id="ENSG00000163608">
    <property type="expression patterns" value="Low tissue specificity"/>
</dbReference>
<dbReference type="MalaCards" id="NEPRO"/>
<dbReference type="MIM" id="617089">
    <property type="type" value="gene"/>
</dbReference>
<dbReference type="MIM" id="618853">
    <property type="type" value="phenotype"/>
</dbReference>
<dbReference type="neXtProt" id="NX_Q6NW34"/>
<dbReference type="OpenTargets" id="ENSG00000163608"/>
<dbReference type="Orphanet" id="93347">
    <property type="disease" value="Anauxetic dysplasia"/>
</dbReference>
<dbReference type="PharmGKB" id="PA134948355"/>
<dbReference type="VEuPathDB" id="HostDB:ENSG00000163608"/>
<dbReference type="eggNOG" id="ENOG502QTP3">
    <property type="taxonomic scope" value="Eukaryota"/>
</dbReference>
<dbReference type="GeneTree" id="ENSGT00390000007644"/>
<dbReference type="HOGENOM" id="CLU_035014_0_0_1"/>
<dbReference type="InParanoid" id="Q6NW34"/>
<dbReference type="OMA" id="EFVLMKI"/>
<dbReference type="OrthoDB" id="9899341at2759"/>
<dbReference type="PAN-GO" id="Q6NW34">
    <property type="GO annotations" value="2 GO annotations based on evolutionary models"/>
</dbReference>
<dbReference type="PhylomeDB" id="Q6NW34"/>
<dbReference type="TreeFam" id="TF335999"/>
<dbReference type="PathwayCommons" id="Q6NW34"/>
<dbReference type="SignaLink" id="Q6NW34"/>
<dbReference type="BioGRID-ORCS" id="25871">
    <property type="hits" value="771 hits in 1152 CRISPR screens"/>
</dbReference>
<dbReference type="CD-CODE" id="91857CE7">
    <property type="entry name" value="Nucleolus"/>
</dbReference>
<dbReference type="ChiTaRS" id="NEPRO">
    <property type="organism name" value="human"/>
</dbReference>
<dbReference type="GenomeRNAi" id="25871"/>
<dbReference type="Pharos" id="Q6NW34">
    <property type="development level" value="Tbio"/>
</dbReference>
<dbReference type="PRO" id="PR:Q6NW34"/>
<dbReference type="Proteomes" id="UP000005640">
    <property type="component" value="Chromosome 3"/>
</dbReference>
<dbReference type="RNAct" id="Q6NW34">
    <property type="molecule type" value="protein"/>
</dbReference>
<dbReference type="Bgee" id="ENSG00000163608">
    <property type="expression patterns" value="Expressed in secondary oocyte and 184 other cell types or tissues"/>
</dbReference>
<dbReference type="ExpressionAtlas" id="Q6NW34">
    <property type="expression patterns" value="baseline and differential"/>
</dbReference>
<dbReference type="GO" id="GO:0005730">
    <property type="term" value="C:nucleolus"/>
    <property type="evidence" value="ECO:0000250"/>
    <property type="project" value="UniProtKB"/>
</dbReference>
<dbReference type="GO" id="GO:0005634">
    <property type="term" value="C:nucleus"/>
    <property type="evidence" value="ECO:0000250"/>
    <property type="project" value="UniProtKB"/>
</dbReference>
<dbReference type="GO" id="GO:0045665">
    <property type="term" value="P:negative regulation of neuron differentiation"/>
    <property type="evidence" value="ECO:0000250"/>
    <property type="project" value="UniProtKB"/>
</dbReference>
<dbReference type="GO" id="GO:0045747">
    <property type="term" value="P:positive regulation of Notch signaling pathway"/>
    <property type="evidence" value="ECO:0000250"/>
    <property type="project" value="UniProtKB"/>
</dbReference>
<dbReference type="InterPro" id="IPR052835">
    <property type="entry name" value="Nepro-associated"/>
</dbReference>
<dbReference type="InterPro" id="IPR027951">
    <property type="entry name" value="Nepro_N"/>
</dbReference>
<dbReference type="PANTHER" id="PTHR34761">
    <property type="entry name" value="NUCLEOLUS AND NEURAL PROGENITOR PROTEIN"/>
    <property type="match status" value="1"/>
</dbReference>
<dbReference type="PANTHER" id="PTHR34761:SF1">
    <property type="entry name" value="NUCLEOLUS AND NEURAL PROGENITOR PROTEIN"/>
    <property type="match status" value="1"/>
</dbReference>
<dbReference type="Pfam" id="PF14780">
    <property type="entry name" value="NEPRO_N"/>
    <property type="match status" value="1"/>
</dbReference>
<keyword id="KW-0025">Alternative splicing</keyword>
<keyword id="KW-0217">Developmental protein</keyword>
<keyword id="KW-0225">Disease variant</keyword>
<keyword id="KW-0242">Dwarfism</keyword>
<keyword id="KW-0539">Nucleus</keyword>
<keyword id="KW-0597">Phosphoprotein</keyword>
<keyword id="KW-1267">Proteomics identification</keyword>
<keyword id="KW-1185">Reference proteome</keyword>
<evidence type="ECO:0000250" key="1">
    <source>
        <dbReference type="UniProtKB" id="Q8R2U2"/>
    </source>
</evidence>
<evidence type="ECO:0000256" key="2">
    <source>
        <dbReference type="SAM" id="MobiDB-lite"/>
    </source>
</evidence>
<evidence type="ECO:0000269" key="3">
    <source>
    </source>
</evidence>
<evidence type="ECO:0000269" key="4">
    <source>
    </source>
</evidence>
<evidence type="ECO:0000269" key="5">
    <source>
    </source>
</evidence>
<evidence type="ECO:0000269" key="6">
    <source>
    </source>
</evidence>
<evidence type="ECO:0000269" key="7">
    <source>
    </source>
</evidence>
<evidence type="ECO:0000269" key="8">
    <source>
    </source>
</evidence>
<evidence type="ECO:0000303" key="9">
    <source>
    </source>
</evidence>
<evidence type="ECO:0000305" key="10"/>
<evidence type="ECO:0000312" key="11">
    <source>
        <dbReference type="HGNC" id="HGNC:24496"/>
    </source>
</evidence>
<evidence type="ECO:0007744" key="12">
    <source>
    </source>
</evidence>
<evidence type="ECO:0007744" key="13">
    <source>
    </source>
</evidence>
<evidence type="ECO:0007744" key="14">
    <source>
    </source>
</evidence>
<organism>
    <name type="scientific">Homo sapiens</name>
    <name type="common">Human</name>
    <dbReference type="NCBI Taxonomy" id="9606"/>
    <lineage>
        <taxon>Eukaryota</taxon>
        <taxon>Metazoa</taxon>
        <taxon>Chordata</taxon>
        <taxon>Craniata</taxon>
        <taxon>Vertebrata</taxon>
        <taxon>Euteleostomi</taxon>
        <taxon>Mammalia</taxon>
        <taxon>Eutheria</taxon>
        <taxon>Euarchontoglires</taxon>
        <taxon>Primates</taxon>
        <taxon>Haplorrhini</taxon>
        <taxon>Catarrhini</taxon>
        <taxon>Hominidae</taxon>
        <taxon>Homo</taxon>
    </lineage>
</organism>
<comment type="function">
    <text evidence="1">May play a role in cortex development as part of the Notch signaling pathway. Downstream of Notch may repress the expression of proneural genes and inhibit neuronal differentiation thereby maintaining neural progenitors. May also play a role in preimplentation embryo development.</text>
</comment>
<comment type="subcellular location">
    <subcellularLocation>
        <location evidence="1">Nucleus</location>
    </subcellularLocation>
    <subcellularLocation>
        <location evidence="1">Nucleus</location>
        <location evidence="1">Nucleolus</location>
    </subcellularLocation>
</comment>
<comment type="alternative products">
    <event type="alternative splicing"/>
    <isoform>
        <id>Q6NW34-1</id>
        <name>1</name>
        <sequence type="displayed"/>
    </isoform>
    <isoform>
        <id>Q6NW34-2</id>
        <name>2</name>
        <sequence type="described" ref="VSP_017342 VSP_017343"/>
    </isoform>
</comment>
<comment type="disease" evidence="6 7 8">
    <disease id="DI-05799">
        <name>Anauxetic dysplasia 3</name>
        <acronym>ANXD3</acronym>
        <description>An autosomal recessive skeletal dysplasia characterized by severe short stature, brachydactyly, skin laxity, joint hypermobility and dislocations, short metacarpals, broad middle phalanges, and metaphyseal irregularities. Most patients also exhibit motor and cognitive delays.</description>
        <dbReference type="MIM" id="618853"/>
    </disease>
    <text>The disease may be caused by variants affecting the gene represented in this entry.</text>
</comment>
<comment type="similarity">
    <text evidence="10">Belongs to the nepro family.</text>
</comment>
<comment type="sequence caution" evidence="10">
    <conflict type="erroneous initiation">
        <sequence resource="EMBL-CDS" id="CAB55998"/>
    </conflict>
    <text>Extended N-terminus.</text>
</comment>
<sequence length="567" mass="64552">MMAAVPPGLEPWNRVRIPKAGNRSAVTVQNPGAALDLCIAAVIKECHLVILSLKSQTLDAETDVLCAVLYSNHNRMGRHKPHLALKQVEQCLKRLKNMNLEGSIQDLFELFSSNENQPLTTKVCVVPSQPVVELVLMKVLGACKLLLRLLDCCCKTFLLTVKHLGLQEFIILNLVMVGLVSRLWVLYKGVLKRLILLYEPLFGLLQEVARIQPMPYFKDFTFPSDITEFLGQPYFEAFKKKMPIAFAAKGINKLLNKLFLINEQSPRASEETLLGISKKAKQMKINVQNNVDLGQPVKNKRVFKEESSEFDVRAFCNQLKHKATQETSFDFKCSQSRLKTTKYSSQKVIGTPHAKSFVQRFREAESFTQLSEEIQMAVVWCRSKKLKAQAIFLGNKLLKSNRLKHLEAQGTSLPKKLECIKTSICNHLLRGSGIKTSKHHLRQRRSQNKFLRRQRKPQRKLQSTLLREIQQFSQGTRKSATDTSAKWRLSHCTVHRTDLYPNSKQLLNSGVSMPVIQTKEKMIHENLRGIHENETDSWTVMQINKNSTSGTIKETDDIDDIFALMGV</sequence>
<accession>Q6NW34</accession>
<accession>D3DN69</accession>
<accession>Q68DM6</accession>
<accession>Q9H7U0</accession>
<accession>Q9UFM4</accession>
<protein>
    <recommendedName>
        <fullName evidence="10">Nucleolus and neural progenitor protein</fullName>
    </recommendedName>
</protein>
<name>NEPRO_HUMAN</name>
<feature type="chain" id="PRO_0000225012" description="Nucleolus and neural progenitor protein">
    <location>
        <begin position="1"/>
        <end position="567"/>
    </location>
</feature>
<feature type="region of interest" description="Disordered" evidence="2">
    <location>
        <begin position="437"/>
        <end position="457"/>
    </location>
</feature>
<feature type="region of interest" description="Nuclear localization signal" evidence="1">
    <location>
        <begin position="442"/>
        <end position="460"/>
    </location>
</feature>
<feature type="modified residue" description="Phosphoserine" evidence="12 13 14">
    <location>
        <position position="265"/>
    </location>
</feature>
<feature type="splice variant" id="VSP_017342" description="In isoform 2." evidence="9">
    <original>N</original>
    <variation>K</variation>
    <location>
        <position position="114"/>
    </location>
</feature>
<feature type="splice variant" id="VSP_017343" description="In isoform 2." evidence="9">
    <location>
        <begin position="115"/>
        <end position="184"/>
    </location>
</feature>
<feature type="sequence variant" id="VAR_084136" description="In ANXD3; uncertain significance; dbSNP:rs1236015814." evidence="6 7">
    <original>R</original>
    <variation>C</variation>
    <location>
        <position position="94"/>
    </location>
</feature>
<feature type="sequence variant" id="VAR_025418" description="In dbSNP:rs2291465.">
    <original>E</original>
    <variation>K</variation>
    <location>
        <position position="101"/>
    </location>
</feature>
<feature type="sequence variant" id="VAR_084137" description="In ANXD3; uncertain significance; dbSNP:rs769447751." evidence="8">
    <original>L</original>
    <variation>F</variation>
    <location>
        <position position="145"/>
    </location>
</feature>
<feature type="sequence variant" id="VAR_025419" description="In dbSNP:rs2306858.">
    <original>P</original>
    <variation>S</variation>
    <location>
        <position position="352"/>
    </location>
</feature>
<feature type="sequence variant" id="VAR_025420" description="In dbSNP:rs2306857." evidence="3 4">
    <original>F</original>
    <variation>I</variation>
    <location>
        <position position="357"/>
    </location>
</feature>
<feature type="sequence variant" id="VAR_025421" description="In dbSNP:rs3732813.">
    <original>T</original>
    <variation>A</variation>
    <location>
        <position position="476"/>
    </location>
</feature>
<feature type="sequence variant" id="VAR_025422" description="In dbSNP:rs7628368." evidence="5">
    <original>S</original>
    <variation>P</variation>
    <location>
        <position position="490"/>
    </location>
</feature>
<feature type="sequence conflict" description="In Ref. 4; AAH67743." evidence="10" ref="4">
    <original>L</original>
    <variation>I</variation>
    <location>
        <position position="35"/>
    </location>
</feature>
<feature type="sequence conflict" description="In Ref. 4; AAH67743." evidence="10" ref="4">
    <original>S</original>
    <variation>N</variation>
    <location>
        <position position="509"/>
    </location>
</feature>
<feature type="sequence conflict" description="In Ref. 4; AAH67743." evidence="10" ref="4">
    <original>E</original>
    <variation>G</variation>
    <location>
        <position position="520"/>
    </location>
</feature>